<dbReference type="EC" id="2.3.1.234" evidence="1"/>
<dbReference type="EMBL" id="CP000117">
    <property type="protein sequence ID" value="ABA21102.1"/>
    <property type="molecule type" value="Genomic_DNA"/>
</dbReference>
<dbReference type="SMR" id="Q3MD34"/>
<dbReference type="STRING" id="240292.Ava_1479"/>
<dbReference type="KEGG" id="ava:Ava_1479"/>
<dbReference type="eggNOG" id="COG0533">
    <property type="taxonomic scope" value="Bacteria"/>
</dbReference>
<dbReference type="HOGENOM" id="CLU_023208_0_2_3"/>
<dbReference type="Proteomes" id="UP000002533">
    <property type="component" value="Chromosome"/>
</dbReference>
<dbReference type="GO" id="GO:0005737">
    <property type="term" value="C:cytoplasm"/>
    <property type="evidence" value="ECO:0007669"/>
    <property type="project" value="UniProtKB-SubCell"/>
</dbReference>
<dbReference type="GO" id="GO:0005506">
    <property type="term" value="F:iron ion binding"/>
    <property type="evidence" value="ECO:0007669"/>
    <property type="project" value="UniProtKB-UniRule"/>
</dbReference>
<dbReference type="GO" id="GO:0061711">
    <property type="term" value="F:N(6)-L-threonylcarbamoyladenine synthase activity"/>
    <property type="evidence" value="ECO:0007669"/>
    <property type="project" value="UniProtKB-EC"/>
</dbReference>
<dbReference type="GO" id="GO:0002949">
    <property type="term" value="P:tRNA threonylcarbamoyladenosine modification"/>
    <property type="evidence" value="ECO:0007669"/>
    <property type="project" value="UniProtKB-UniRule"/>
</dbReference>
<dbReference type="CDD" id="cd24133">
    <property type="entry name" value="ASKHA_NBD_TsaD_bac"/>
    <property type="match status" value="1"/>
</dbReference>
<dbReference type="FunFam" id="3.30.420.40:FF:000012">
    <property type="entry name" value="tRNA N6-adenosine threonylcarbamoyltransferase"/>
    <property type="match status" value="1"/>
</dbReference>
<dbReference type="FunFam" id="3.30.420.40:FF:000040">
    <property type="entry name" value="tRNA N6-adenosine threonylcarbamoyltransferase"/>
    <property type="match status" value="1"/>
</dbReference>
<dbReference type="Gene3D" id="3.30.420.40">
    <property type="match status" value="2"/>
</dbReference>
<dbReference type="HAMAP" id="MF_01445">
    <property type="entry name" value="TsaD"/>
    <property type="match status" value="1"/>
</dbReference>
<dbReference type="InterPro" id="IPR043129">
    <property type="entry name" value="ATPase_NBD"/>
</dbReference>
<dbReference type="InterPro" id="IPR000905">
    <property type="entry name" value="Gcp-like_dom"/>
</dbReference>
<dbReference type="InterPro" id="IPR017861">
    <property type="entry name" value="KAE1/TsaD"/>
</dbReference>
<dbReference type="InterPro" id="IPR017860">
    <property type="entry name" value="Peptidase_M22_CS"/>
</dbReference>
<dbReference type="InterPro" id="IPR022450">
    <property type="entry name" value="TsaD"/>
</dbReference>
<dbReference type="NCBIfam" id="TIGR00329">
    <property type="entry name" value="gcp_kae1"/>
    <property type="match status" value="1"/>
</dbReference>
<dbReference type="NCBIfam" id="TIGR03723">
    <property type="entry name" value="T6A_TsaD_YgjD"/>
    <property type="match status" value="1"/>
</dbReference>
<dbReference type="PANTHER" id="PTHR11735">
    <property type="entry name" value="TRNA N6-ADENOSINE THREONYLCARBAMOYLTRANSFERASE"/>
    <property type="match status" value="1"/>
</dbReference>
<dbReference type="PANTHER" id="PTHR11735:SF6">
    <property type="entry name" value="TRNA N6-ADENOSINE THREONYLCARBAMOYLTRANSFERASE, MITOCHONDRIAL"/>
    <property type="match status" value="1"/>
</dbReference>
<dbReference type="Pfam" id="PF00814">
    <property type="entry name" value="TsaD"/>
    <property type="match status" value="1"/>
</dbReference>
<dbReference type="PRINTS" id="PR00789">
    <property type="entry name" value="OSIALOPTASE"/>
</dbReference>
<dbReference type="SUPFAM" id="SSF53067">
    <property type="entry name" value="Actin-like ATPase domain"/>
    <property type="match status" value="2"/>
</dbReference>
<dbReference type="PROSITE" id="PS01016">
    <property type="entry name" value="GLYCOPROTEASE"/>
    <property type="match status" value="1"/>
</dbReference>
<evidence type="ECO:0000255" key="1">
    <source>
        <dbReference type="HAMAP-Rule" id="MF_01445"/>
    </source>
</evidence>
<gene>
    <name evidence="1" type="primary">tsaD</name>
    <name type="synonym">gcp</name>
    <name type="ordered locus">Ava_1479</name>
</gene>
<protein>
    <recommendedName>
        <fullName evidence="1">tRNA N6-adenosine threonylcarbamoyltransferase</fullName>
        <ecNumber evidence="1">2.3.1.234</ecNumber>
    </recommendedName>
    <alternativeName>
        <fullName evidence="1">N6-L-threonylcarbamoyladenine synthase</fullName>
        <shortName evidence="1">t(6)A synthase</shortName>
    </alternativeName>
    <alternativeName>
        <fullName evidence="1">t(6)A37 threonylcarbamoyladenosine biosynthesis protein TsaD</fullName>
    </alternativeName>
    <alternativeName>
        <fullName evidence="1">tRNA threonylcarbamoyladenosine biosynthesis protein TsaD</fullName>
    </alternativeName>
</protein>
<keyword id="KW-0012">Acyltransferase</keyword>
<keyword id="KW-0963">Cytoplasm</keyword>
<keyword id="KW-0408">Iron</keyword>
<keyword id="KW-0479">Metal-binding</keyword>
<keyword id="KW-0808">Transferase</keyword>
<keyword id="KW-0819">tRNA processing</keyword>
<organism>
    <name type="scientific">Trichormus variabilis (strain ATCC 29413 / PCC 7937)</name>
    <name type="common">Anabaena variabilis</name>
    <dbReference type="NCBI Taxonomy" id="240292"/>
    <lineage>
        <taxon>Bacteria</taxon>
        <taxon>Bacillati</taxon>
        <taxon>Cyanobacteriota</taxon>
        <taxon>Cyanophyceae</taxon>
        <taxon>Nostocales</taxon>
        <taxon>Nostocaceae</taxon>
        <taxon>Trichormus</taxon>
    </lineage>
</organism>
<accession>Q3MD34</accession>
<name>TSAD_TRIV2</name>
<proteinExistence type="inferred from homology"/>
<feature type="chain" id="PRO_0000303253" description="tRNA N6-adenosine threonylcarbamoyltransferase">
    <location>
        <begin position="1"/>
        <end position="346"/>
    </location>
</feature>
<feature type="binding site" evidence="1">
    <location>
        <position position="111"/>
    </location>
    <ligand>
        <name>Fe cation</name>
        <dbReference type="ChEBI" id="CHEBI:24875"/>
    </ligand>
</feature>
<feature type="binding site" evidence="1">
    <location>
        <position position="115"/>
    </location>
    <ligand>
        <name>Fe cation</name>
        <dbReference type="ChEBI" id="CHEBI:24875"/>
    </ligand>
</feature>
<feature type="binding site" evidence="1">
    <location>
        <begin position="134"/>
        <end position="138"/>
    </location>
    <ligand>
        <name>substrate</name>
    </ligand>
</feature>
<feature type="binding site" evidence="1">
    <location>
        <position position="167"/>
    </location>
    <ligand>
        <name>substrate</name>
    </ligand>
</feature>
<feature type="binding site" evidence="1">
    <location>
        <position position="180"/>
    </location>
    <ligand>
        <name>substrate</name>
    </ligand>
</feature>
<feature type="binding site" evidence="1">
    <location>
        <position position="184"/>
    </location>
    <ligand>
        <name>substrate</name>
    </ligand>
</feature>
<feature type="binding site" evidence="1">
    <location>
        <position position="279"/>
    </location>
    <ligand>
        <name>substrate</name>
    </ligand>
</feature>
<feature type="binding site" evidence="1">
    <location>
        <position position="307"/>
    </location>
    <ligand>
        <name>Fe cation</name>
        <dbReference type="ChEBI" id="CHEBI:24875"/>
    </ligand>
</feature>
<sequence>MTTVLAIETSCDETAVAIVNNRQVCSSIIASQIPVHQQYGGVVPEVASRAHLETINDAIAQAMDQAQLGWDKIDGIAATCAPGLVGALLVGLTAAKTLAILHNKPFLGVHHLEGHIYATYLSEPTLDPPFLSLLVSGGHTSLIYVKECGRYESLGETRDDAAGEAFDKVARLLKLGYPGGPVIDKLAQTGNSQAFALPEGKVSLAGGGYHPYDGSFSGLKTAVLRLVQQLERDGDPLPIEDISASFQATVAKALTKRAIACALDYGLDTIAVGGGVAANSGLRQHLQAAATANNLRVLFPPLKFCTDNAAMIACAAADHLSRGHLSPITLGVESRLSLSQVMKLYQ</sequence>
<comment type="function">
    <text evidence="1">Required for the formation of a threonylcarbamoyl group on adenosine at position 37 (t(6)A37) in tRNAs that read codons beginning with adenine. Is involved in the transfer of the threonylcarbamoyl moiety of threonylcarbamoyl-AMP (TC-AMP) to the N6 group of A37, together with TsaE and TsaB. TsaD likely plays a direct catalytic role in this reaction.</text>
</comment>
<comment type="catalytic activity">
    <reaction evidence="1">
        <text>L-threonylcarbamoyladenylate + adenosine(37) in tRNA = N(6)-L-threonylcarbamoyladenosine(37) in tRNA + AMP + H(+)</text>
        <dbReference type="Rhea" id="RHEA:37059"/>
        <dbReference type="Rhea" id="RHEA-COMP:10162"/>
        <dbReference type="Rhea" id="RHEA-COMP:10163"/>
        <dbReference type="ChEBI" id="CHEBI:15378"/>
        <dbReference type="ChEBI" id="CHEBI:73682"/>
        <dbReference type="ChEBI" id="CHEBI:74411"/>
        <dbReference type="ChEBI" id="CHEBI:74418"/>
        <dbReference type="ChEBI" id="CHEBI:456215"/>
        <dbReference type="EC" id="2.3.1.234"/>
    </reaction>
</comment>
<comment type="cofactor">
    <cofactor evidence="1">
        <name>Fe(2+)</name>
        <dbReference type="ChEBI" id="CHEBI:29033"/>
    </cofactor>
    <text evidence="1">Binds 1 Fe(2+) ion per subunit.</text>
</comment>
<comment type="subcellular location">
    <subcellularLocation>
        <location evidence="1">Cytoplasm</location>
    </subcellularLocation>
</comment>
<comment type="similarity">
    <text evidence="1">Belongs to the KAE1 / TsaD family.</text>
</comment>
<reference key="1">
    <citation type="journal article" date="2014" name="Stand. Genomic Sci.">
        <title>Complete genome sequence of Anabaena variabilis ATCC 29413.</title>
        <authorList>
            <person name="Thiel T."/>
            <person name="Pratte B.S."/>
            <person name="Zhong J."/>
            <person name="Goodwin L."/>
            <person name="Copeland A."/>
            <person name="Lucas S."/>
            <person name="Han C."/>
            <person name="Pitluck S."/>
            <person name="Land M.L."/>
            <person name="Kyrpides N.C."/>
            <person name="Woyke T."/>
        </authorList>
    </citation>
    <scope>NUCLEOTIDE SEQUENCE [LARGE SCALE GENOMIC DNA]</scope>
    <source>
        <strain>ATCC 29413 / PCC 7937</strain>
    </source>
</reference>